<sequence>MKTPLAPTKSNLAYVRDQLGLARDGYRLLEQKREILFMELTSLLEEVHLLETELDKRRKQAYASLWQLLLAQGRDDIAACALVTPVPCRVQQEVLLIAGLRFLRLDAVMQPPKLQYAALGSSACMDRAREDFGLLLQTLTRMASVQTIVWRLASEMRKTQRRVNALSKQIIPQMCETCMYIESVLEERDRESTFVLKSLKARKDPTTTL</sequence>
<dbReference type="EMBL" id="AE000520">
    <property type="protein sequence ID" value="AAC65514.1"/>
    <property type="molecule type" value="Genomic_DNA"/>
</dbReference>
<dbReference type="PIR" id="A71313">
    <property type="entry name" value="A71313"/>
</dbReference>
<dbReference type="RefSeq" id="WP_010881975.1">
    <property type="nucleotide sequence ID" value="NC_021490.2"/>
</dbReference>
<dbReference type="SMR" id="O83539"/>
<dbReference type="IntAct" id="O83539">
    <property type="interactions" value="18"/>
</dbReference>
<dbReference type="STRING" id="243276.TP_0527"/>
<dbReference type="TCDB" id="3.A.2.3.3">
    <property type="family name" value="the h+- or na+-translocating f-type, v-type and a-type atpase (f-atpase) superfamily"/>
</dbReference>
<dbReference type="EnsemblBacteria" id="AAC65514">
    <property type="protein sequence ID" value="AAC65514"/>
    <property type="gene ID" value="TP_0527"/>
</dbReference>
<dbReference type="KEGG" id="tpa:TP_0527"/>
<dbReference type="KEGG" id="tpw:TPANIC_0527"/>
<dbReference type="eggNOG" id="COG1394">
    <property type="taxonomic scope" value="Bacteria"/>
</dbReference>
<dbReference type="HOGENOM" id="CLU_069688_2_0_12"/>
<dbReference type="OrthoDB" id="9781718at2"/>
<dbReference type="Proteomes" id="UP000000811">
    <property type="component" value="Chromosome"/>
</dbReference>
<dbReference type="GO" id="GO:0005524">
    <property type="term" value="F:ATP binding"/>
    <property type="evidence" value="ECO:0007669"/>
    <property type="project" value="UniProtKB-UniRule"/>
</dbReference>
<dbReference type="GO" id="GO:0046933">
    <property type="term" value="F:proton-transporting ATP synthase activity, rotational mechanism"/>
    <property type="evidence" value="ECO:0007669"/>
    <property type="project" value="UniProtKB-UniRule"/>
</dbReference>
<dbReference type="GO" id="GO:0046961">
    <property type="term" value="F:proton-transporting ATPase activity, rotational mechanism"/>
    <property type="evidence" value="ECO:0007669"/>
    <property type="project" value="InterPro"/>
</dbReference>
<dbReference type="GO" id="GO:0042777">
    <property type="term" value="P:proton motive force-driven plasma membrane ATP synthesis"/>
    <property type="evidence" value="ECO:0007669"/>
    <property type="project" value="UniProtKB-UniRule"/>
</dbReference>
<dbReference type="Gene3D" id="1.10.287.3240">
    <property type="match status" value="1"/>
</dbReference>
<dbReference type="HAMAP" id="MF_00271">
    <property type="entry name" value="ATP_synth_D_arch"/>
    <property type="match status" value="1"/>
</dbReference>
<dbReference type="InterPro" id="IPR002699">
    <property type="entry name" value="V_ATPase_D"/>
</dbReference>
<dbReference type="NCBIfam" id="TIGR00309">
    <property type="entry name" value="V_ATPase_subD"/>
    <property type="match status" value="1"/>
</dbReference>
<dbReference type="PANTHER" id="PTHR11671">
    <property type="entry name" value="V-TYPE ATP SYNTHASE SUBUNIT D"/>
    <property type="match status" value="1"/>
</dbReference>
<dbReference type="Pfam" id="PF01813">
    <property type="entry name" value="ATP-synt_D"/>
    <property type="match status" value="1"/>
</dbReference>
<comment type="function">
    <text evidence="1">Produces ATP from ADP in the presence of a proton gradient across the membrane.</text>
</comment>
<comment type="similarity">
    <text evidence="2">Belongs to the V-ATPase D subunit family.</text>
</comment>
<evidence type="ECO:0000250" key="1"/>
<evidence type="ECO:0000305" key="2"/>
<reference key="1">
    <citation type="journal article" date="1998" name="Science">
        <title>Complete genome sequence of Treponema pallidum, the syphilis spirochete.</title>
        <authorList>
            <person name="Fraser C.M."/>
            <person name="Norris S.J."/>
            <person name="Weinstock G.M."/>
            <person name="White O."/>
            <person name="Sutton G.G."/>
            <person name="Dodson R.J."/>
            <person name="Gwinn M.L."/>
            <person name="Hickey E.K."/>
            <person name="Clayton R.A."/>
            <person name="Ketchum K.A."/>
            <person name="Sodergren E."/>
            <person name="Hardham J.M."/>
            <person name="McLeod M.P."/>
            <person name="Salzberg S.L."/>
            <person name="Peterson J.D."/>
            <person name="Khalak H.G."/>
            <person name="Richardson D.L."/>
            <person name="Howell J.K."/>
            <person name="Chidambaram M."/>
            <person name="Utterback T.R."/>
            <person name="McDonald L.A."/>
            <person name="Artiach P."/>
            <person name="Bowman C."/>
            <person name="Cotton M.D."/>
            <person name="Fujii C."/>
            <person name="Garland S.A."/>
            <person name="Hatch B."/>
            <person name="Horst K."/>
            <person name="Roberts K.M."/>
            <person name="Sandusky M."/>
            <person name="Weidman J.F."/>
            <person name="Smith H.O."/>
            <person name="Venter J.C."/>
        </authorList>
    </citation>
    <scope>NUCLEOTIDE SEQUENCE [LARGE SCALE GENOMIC DNA]</scope>
    <source>
        <strain>Nichols</strain>
    </source>
</reference>
<feature type="chain" id="PRO_0000144274" description="V-type ATP synthase subunit D 2">
    <location>
        <begin position="1"/>
        <end position="209"/>
    </location>
</feature>
<organism>
    <name type="scientific">Treponema pallidum (strain Nichols)</name>
    <dbReference type="NCBI Taxonomy" id="243276"/>
    <lineage>
        <taxon>Bacteria</taxon>
        <taxon>Pseudomonadati</taxon>
        <taxon>Spirochaetota</taxon>
        <taxon>Spirochaetia</taxon>
        <taxon>Spirochaetales</taxon>
        <taxon>Treponemataceae</taxon>
        <taxon>Treponema</taxon>
    </lineage>
</organism>
<accession>O83539</accession>
<protein>
    <recommendedName>
        <fullName>V-type ATP synthase subunit D 2</fullName>
    </recommendedName>
    <alternativeName>
        <fullName>V-ATPase subunit D 2</fullName>
    </alternativeName>
</protein>
<gene>
    <name type="primary">atpD2</name>
    <name type="ordered locus">TP_0527</name>
</gene>
<name>VATD2_TREPA</name>
<keyword id="KW-0066">ATP synthesis</keyword>
<keyword id="KW-0375">Hydrogen ion transport</keyword>
<keyword id="KW-0406">Ion transport</keyword>
<keyword id="KW-1185">Reference proteome</keyword>
<keyword id="KW-0813">Transport</keyword>
<proteinExistence type="inferred from homology"/>